<proteinExistence type="evidence at protein level"/>
<evidence type="ECO:0000255" key="1">
    <source>
        <dbReference type="HAMAP-Rule" id="MF_01132"/>
    </source>
</evidence>
<sequence length="131" mass="15441">MVTLFTSPSCTSCRKAKAWLQEHDIPYTERNIFSEHLTIDEIKQILKMTEDGTDEIISTRSKTYQKLNVDIDSLPLQDLYSIIQDNPGLLRRPIILDNKRLQVGYNEDEIRRFLPRKVRTFQLQEAQRMVD</sequence>
<gene>
    <name evidence="1" type="primary">spx</name>
    <name type="ordered locus">SA0856</name>
</gene>
<dbReference type="EMBL" id="BA000018">
    <property type="protein sequence ID" value="BAB42097.1"/>
    <property type="molecule type" value="Genomic_DNA"/>
</dbReference>
<dbReference type="PIR" id="F89867">
    <property type="entry name" value="F89867"/>
</dbReference>
<dbReference type="SMR" id="P60379"/>
<dbReference type="EnsemblBacteria" id="BAB42097">
    <property type="protein sequence ID" value="BAB42097"/>
    <property type="gene ID" value="BAB42097"/>
</dbReference>
<dbReference type="KEGG" id="sau:SA0856"/>
<dbReference type="HOGENOM" id="CLU_116644_1_1_9"/>
<dbReference type="GO" id="GO:0005737">
    <property type="term" value="C:cytoplasm"/>
    <property type="evidence" value="ECO:0007669"/>
    <property type="project" value="UniProtKB-SubCell"/>
</dbReference>
<dbReference type="GO" id="GO:0045892">
    <property type="term" value="P:negative regulation of DNA-templated transcription"/>
    <property type="evidence" value="ECO:0007669"/>
    <property type="project" value="InterPro"/>
</dbReference>
<dbReference type="CDD" id="cd03032">
    <property type="entry name" value="ArsC_Spx"/>
    <property type="match status" value="1"/>
</dbReference>
<dbReference type="Gene3D" id="3.40.30.10">
    <property type="entry name" value="Glutaredoxin"/>
    <property type="match status" value="1"/>
</dbReference>
<dbReference type="HAMAP" id="MF_01132">
    <property type="entry name" value="Spx"/>
    <property type="match status" value="1"/>
</dbReference>
<dbReference type="InterPro" id="IPR006660">
    <property type="entry name" value="Arsenate_reductase-like"/>
</dbReference>
<dbReference type="InterPro" id="IPR023731">
    <property type="entry name" value="Spx"/>
</dbReference>
<dbReference type="InterPro" id="IPR036249">
    <property type="entry name" value="Thioredoxin-like_sf"/>
</dbReference>
<dbReference type="InterPro" id="IPR006504">
    <property type="entry name" value="Tscrpt_reg_Spx/MgsR"/>
</dbReference>
<dbReference type="NCBIfam" id="TIGR01617">
    <property type="entry name" value="arsC_related"/>
    <property type="match status" value="1"/>
</dbReference>
<dbReference type="NCBIfam" id="NF002459">
    <property type="entry name" value="PRK01655.1"/>
    <property type="match status" value="1"/>
</dbReference>
<dbReference type="NCBIfam" id="NF009210">
    <property type="entry name" value="PRK12559.1"/>
    <property type="match status" value="1"/>
</dbReference>
<dbReference type="PANTHER" id="PTHR30041">
    <property type="entry name" value="ARSENATE REDUCTASE"/>
    <property type="match status" value="1"/>
</dbReference>
<dbReference type="PANTHER" id="PTHR30041:SF7">
    <property type="entry name" value="GLOBAL TRANSCRIPTIONAL REGULATOR SPX"/>
    <property type="match status" value="1"/>
</dbReference>
<dbReference type="Pfam" id="PF03960">
    <property type="entry name" value="ArsC"/>
    <property type="match status" value="1"/>
</dbReference>
<dbReference type="SUPFAM" id="SSF52833">
    <property type="entry name" value="Thioredoxin-like"/>
    <property type="match status" value="1"/>
</dbReference>
<dbReference type="PROSITE" id="PS51353">
    <property type="entry name" value="ARSC"/>
    <property type="match status" value="1"/>
</dbReference>
<organism>
    <name type="scientific">Staphylococcus aureus (strain N315)</name>
    <dbReference type="NCBI Taxonomy" id="158879"/>
    <lineage>
        <taxon>Bacteria</taxon>
        <taxon>Bacillati</taxon>
        <taxon>Bacillota</taxon>
        <taxon>Bacilli</taxon>
        <taxon>Bacillales</taxon>
        <taxon>Staphylococcaceae</taxon>
        <taxon>Staphylococcus</taxon>
    </lineage>
</organism>
<keyword id="KW-0963">Cytoplasm</keyword>
<keyword id="KW-1015">Disulfide bond</keyword>
<keyword id="KW-0676">Redox-active center</keyword>
<keyword id="KW-0804">Transcription</keyword>
<keyword id="KW-0805">Transcription regulation</keyword>
<name>SPX_STAAN</name>
<feature type="chain" id="PRO_0000162564" description="Global transcriptional regulator Spx">
    <location>
        <begin position="1"/>
        <end position="131"/>
    </location>
</feature>
<feature type="disulfide bond" description="Redox-active" evidence="1">
    <location>
        <begin position="10"/>
        <end position="13"/>
    </location>
</feature>
<accession>P60379</accession>
<accession>Q99V93</accession>
<protein>
    <recommendedName>
        <fullName evidence="1">Global transcriptional regulator Spx</fullName>
    </recommendedName>
</protein>
<comment type="function">
    <text evidence="1">Global transcriptional regulator that plays a key role in stress response and exerts either positive or negative regulation of genes. Acts by interacting with the C-terminal domain of the alpha subunit of the RNA polymerase (RNAP). This interaction can enhance binding of RNAP to the promoter region of target genes and stimulate their transcription, or block interaction of RNAP with activator.</text>
</comment>
<comment type="subunit">
    <text evidence="1">Interacts with the C-terminal domain of the alpha subunit of the RNAP.</text>
</comment>
<comment type="subcellular location">
    <subcellularLocation>
        <location evidence="1">Cytoplasm</location>
    </subcellularLocation>
</comment>
<comment type="similarity">
    <text evidence="1">Belongs to the ArsC family. Spx subfamily.</text>
</comment>
<reference key="1">
    <citation type="journal article" date="2001" name="Lancet">
        <title>Whole genome sequencing of meticillin-resistant Staphylococcus aureus.</title>
        <authorList>
            <person name="Kuroda M."/>
            <person name="Ohta T."/>
            <person name="Uchiyama I."/>
            <person name="Baba T."/>
            <person name="Yuzawa H."/>
            <person name="Kobayashi I."/>
            <person name="Cui L."/>
            <person name="Oguchi A."/>
            <person name="Aoki K."/>
            <person name="Nagai Y."/>
            <person name="Lian J.-Q."/>
            <person name="Ito T."/>
            <person name="Kanamori M."/>
            <person name="Matsumaru H."/>
            <person name="Maruyama A."/>
            <person name="Murakami H."/>
            <person name="Hosoyama A."/>
            <person name="Mizutani-Ui Y."/>
            <person name="Takahashi N.K."/>
            <person name="Sawano T."/>
            <person name="Inoue R."/>
            <person name="Kaito C."/>
            <person name="Sekimizu K."/>
            <person name="Hirakawa H."/>
            <person name="Kuhara S."/>
            <person name="Goto S."/>
            <person name="Yabuzaki J."/>
            <person name="Kanehisa M."/>
            <person name="Yamashita A."/>
            <person name="Oshima K."/>
            <person name="Furuya K."/>
            <person name="Yoshino C."/>
            <person name="Shiba T."/>
            <person name="Hattori M."/>
            <person name="Ogasawara N."/>
            <person name="Hayashi H."/>
            <person name="Hiramatsu K."/>
        </authorList>
    </citation>
    <scope>NUCLEOTIDE SEQUENCE [LARGE SCALE GENOMIC DNA]</scope>
    <source>
        <strain>N315</strain>
    </source>
</reference>
<reference key="2">
    <citation type="submission" date="2007-10" db="UniProtKB">
        <title>Shotgun proteomic analysis of total and membrane protein extracts of S. aureus strain N315.</title>
        <authorList>
            <person name="Vaezzadeh A.R."/>
            <person name="Deshusses J."/>
            <person name="Lescuyer P."/>
            <person name="Hochstrasser D.F."/>
        </authorList>
    </citation>
    <scope>IDENTIFICATION BY MASS SPECTROMETRY [LARGE SCALE ANALYSIS]</scope>
    <source>
        <strain>N315</strain>
    </source>
</reference>